<organism>
    <name type="scientific">Bacillus pumilus (strain SAFR-032)</name>
    <dbReference type="NCBI Taxonomy" id="315750"/>
    <lineage>
        <taxon>Bacteria</taxon>
        <taxon>Bacillati</taxon>
        <taxon>Bacillota</taxon>
        <taxon>Bacilli</taxon>
        <taxon>Bacillales</taxon>
        <taxon>Bacillaceae</taxon>
        <taxon>Bacillus</taxon>
    </lineage>
</organism>
<keyword id="KW-0274">FAD</keyword>
<keyword id="KW-0285">Flavoprotein</keyword>
<keyword id="KW-0521">NADP</keyword>
<keyword id="KW-0560">Oxidoreductase</keyword>
<accession>A8FH11</accession>
<feature type="chain" id="PRO_0000364800" description="Ferredoxin--NADP reductase 2">
    <location>
        <begin position="1"/>
        <end position="332"/>
    </location>
</feature>
<feature type="binding site" evidence="1">
    <location>
        <position position="37"/>
    </location>
    <ligand>
        <name>FAD</name>
        <dbReference type="ChEBI" id="CHEBI:57692"/>
    </ligand>
</feature>
<feature type="binding site" evidence="1">
    <location>
        <position position="45"/>
    </location>
    <ligand>
        <name>FAD</name>
        <dbReference type="ChEBI" id="CHEBI:57692"/>
    </ligand>
</feature>
<feature type="binding site" evidence="1">
    <location>
        <position position="50"/>
    </location>
    <ligand>
        <name>FAD</name>
        <dbReference type="ChEBI" id="CHEBI:57692"/>
    </ligand>
</feature>
<feature type="binding site" evidence="1">
    <location>
        <position position="90"/>
    </location>
    <ligand>
        <name>FAD</name>
        <dbReference type="ChEBI" id="CHEBI:57692"/>
    </ligand>
</feature>
<feature type="binding site" evidence="1">
    <location>
        <position position="124"/>
    </location>
    <ligand>
        <name>FAD</name>
        <dbReference type="ChEBI" id="CHEBI:57692"/>
    </ligand>
</feature>
<feature type="binding site" evidence="1">
    <location>
        <position position="285"/>
    </location>
    <ligand>
        <name>FAD</name>
        <dbReference type="ChEBI" id="CHEBI:57692"/>
    </ligand>
</feature>
<feature type="binding site" evidence="1">
    <location>
        <position position="326"/>
    </location>
    <ligand>
        <name>FAD</name>
        <dbReference type="ChEBI" id="CHEBI:57692"/>
    </ligand>
</feature>
<name>FENR2_BACP2</name>
<reference key="1">
    <citation type="journal article" date="2007" name="PLoS ONE">
        <title>Paradoxical DNA repair and peroxide resistance gene conservation in Bacillus pumilus SAFR-032.</title>
        <authorList>
            <person name="Gioia J."/>
            <person name="Yerrapragada S."/>
            <person name="Qin X."/>
            <person name="Jiang H."/>
            <person name="Igboeli O.C."/>
            <person name="Muzny D."/>
            <person name="Dugan-Rocha S."/>
            <person name="Ding Y."/>
            <person name="Hawes A."/>
            <person name="Liu W."/>
            <person name="Perez L."/>
            <person name="Kovar C."/>
            <person name="Dinh H."/>
            <person name="Lee S."/>
            <person name="Nazareth L."/>
            <person name="Blyth P."/>
            <person name="Holder M."/>
            <person name="Buhay C."/>
            <person name="Tirumalai M.R."/>
            <person name="Liu Y."/>
            <person name="Dasgupta I."/>
            <person name="Bokhetache L."/>
            <person name="Fujita M."/>
            <person name="Karouia F."/>
            <person name="Eswara Moorthy P."/>
            <person name="Siefert J."/>
            <person name="Uzman A."/>
            <person name="Buzumbo P."/>
            <person name="Verma A."/>
            <person name="Zwiya H."/>
            <person name="McWilliams B.D."/>
            <person name="Olowu A."/>
            <person name="Clinkenbeard K.D."/>
            <person name="Newcombe D."/>
            <person name="Golebiewski L."/>
            <person name="Petrosino J.F."/>
            <person name="Nicholson W.L."/>
            <person name="Fox G.E."/>
            <person name="Venkateswaran K."/>
            <person name="Highlander S.K."/>
            <person name="Weinstock G.M."/>
        </authorList>
    </citation>
    <scope>NUCLEOTIDE SEQUENCE [LARGE SCALE GENOMIC DNA]</scope>
    <source>
        <strain>SAFR-032</strain>
    </source>
</reference>
<protein>
    <recommendedName>
        <fullName evidence="1">Ferredoxin--NADP reductase 2</fullName>
        <shortName evidence="1">FNR 2</shortName>
        <shortName evidence="1">Fd-NADP(+) reductase 2</shortName>
        <ecNumber evidence="1">1.18.1.2</ecNumber>
    </recommendedName>
</protein>
<proteinExistence type="inferred from homology"/>
<sequence>MQEDSKVYDITVIGGGPVGLFTAFYGGMRQASVKIIESLPQLGGQLSALYPEKYIYDVAGFPKIRAQELVDNLKEQMDKFDQTICLEQAVETVEKQADGIFKLVTNQEIHYSKTIIITAGNGAFQPRKLELDAAESFEGSNLHYFINDLNQFAGRRVAVLGGGDSAVDWALMLEPIAKEVSIIHRRDKFRAHEHSVENLHNSKVNVVTPFVPTELIGEDRIEQIVLEEVKGDKKQVLDVDDVIVNFGFVSSLGPIKQWGLEIEKNSIVVKSTMETNIEGFYAAGDICTYEGKVKLIASGFGEAPTAVNNAKAYMDPKARVQPLHSTSLFENK</sequence>
<comment type="catalytic activity">
    <reaction evidence="1">
        <text>2 reduced [2Fe-2S]-[ferredoxin] + NADP(+) + H(+) = 2 oxidized [2Fe-2S]-[ferredoxin] + NADPH</text>
        <dbReference type="Rhea" id="RHEA:20125"/>
        <dbReference type="Rhea" id="RHEA-COMP:10000"/>
        <dbReference type="Rhea" id="RHEA-COMP:10001"/>
        <dbReference type="ChEBI" id="CHEBI:15378"/>
        <dbReference type="ChEBI" id="CHEBI:33737"/>
        <dbReference type="ChEBI" id="CHEBI:33738"/>
        <dbReference type="ChEBI" id="CHEBI:57783"/>
        <dbReference type="ChEBI" id="CHEBI:58349"/>
        <dbReference type="EC" id="1.18.1.2"/>
    </reaction>
</comment>
<comment type="cofactor">
    <cofactor evidence="1">
        <name>FAD</name>
        <dbReference type="ChEBI" id="CHEBI:57692"/>
    </cofactor>
    <text evidence="1">Binds 1 FAD per subunit.</text>
</comment>
<comment type="subunit">
    <text evidence="1">Homodimer.</text>
</comment>
<comment type="similarity">
    <text evidence="1">Belongs to the ferredoxin--NADP reductase type 2 family.</text>
</comment>
<dbReference type="EC" id="1.18.1.2" evidence="1"/>
<dbReference type="EMBL" id="CP000813">
    <property type="protein sequence ID" value="ABV63528.1"/>
    <property type="molecule type" value="Genomic_DNA"/>
</dbReference>
<dbReference type="SMR" id="A8FH11"/>
<dbReference type="STRING" id="315750.BPUM_2873"/>
<dbReference type="GeneID" id="5622160"/>
<dbReference type="KEGG" id="bpu:BPUM_2873"/>
<dbReference type="eggNOG" id="COG0492">
    <property type="taxonomic scope" value="Bacteria"/>
</dbReference>
<dbReference type="HOGENOM" id="CLU_031864_5_5_9"/>
<dbReference type="OrthoDB" id="9806179at2"/>
<dbReference type="Proteomes" id="UP000001355">
    <property type="component" value="Chromosome"/>
</dbReference>
<dbReference type="GO" id="GO:0004324">
    <property type="term" value="F:ferredoxin-NADP+ reductase activity"/>
    <property type="evidence" value="ECO:0007669"/>
    <property type="project" value="UniProtKB-UniRule"/>
</dbReference>
<dbReference type="GO" id="GO:0050660">
    <property type="term" value="F:flavin adenine dinucleotide binding"/>
    <property type="evidence" value="ECO:0007669"/>
    <property type="project" value="UniProtKB-UniRule"/>
</dbReference>
<dbReference type="GO" id="GO:0050661">
    <property type="term" value="F:NADP binding"/>
    <property type="evidence" value="ECO:0007669"/>
    <property type="project" value="UniProtKB-UniRule"/>
</dbReference>
<dbReference type="Gene3D" id="3.50.50.60">
    <property type="entry name" value="FAD/NAD(P)-binding domain"/>
    <property type="match status" value="2"/>
</dbReference>
<dbReference type="HAMAP" id="MF_01685">
    <property type="entry name" value="FENR2"/>
    <property type="match status" value="1"/>
</dbReference>
<dbReference type="InterPro" id="IPR036188">
    <property type="entry name" value="FAD/NAD-bd_sf"/>
</dbReference>
<dbReference type="InterPro" id="IPR023753">
    <property type="entry name" value="FAD/NAD-binding_dom"/>
</dbReference>
<dbReference type="InterPro" id="IPR022890">
    <property type="entry name" value="Fd--NADP_Rdtase_type_2"/>
</dbReference>
<dbReference type="InterPro" id="IPR050097">
    <property type="entry name" value="Ferredoxin-NADP_redctase_2"/>
</dbReference>
<dbReference type="PANTHER" id="PTHR48105">
    <property type="entry name" value="THIOREDOXIN REDUCTASE 1-RELATED-RELATED"/>
    <property type="match status" value="1"/>
</dbReference>
<dbReference type="Pfam" id="PF07992">
    <property type="entry name" value="Pyr_redox_2"/>
    <property type="match status" value="1"/>
</dbReference>
<dbReference type="PRINTS" id="PR00368">
    <property type="entry name" value="FADPNR"/>
</dbReference>
<dbReference type="PRINTS" id="PR00469">
    <property type="entry name" value="PNDRDTASEII"/>
</dbReference>
<dbReference type="SUPFAM" id="SSF51905">
    <property type="entry name" value="FAD/NAD(P)-binding domain"/>
    <property type="match status" value="1"/>
</dbReference>
<gene>
    <name type="ordered locus">BPUM_2873</name>
</gene>
<evidence type="ECO:0000255" key="1">
    <source>
        <dbReference type="HAMAP-Rule" id="MF_01685"/>
    </source>
</evidence>